<proteinExistence type="inferred from homology"/>
<protein>
    <recommendedName>
        <fullName evidence="1">Chaperone protein DnaJ 1</fullName>
    </recommendedName>
</protein>
<reference key="1">
    <citation type="journal article" date="2003" name="Appl. Microbiol. Biotechnol.">
        <title>The Corynebacterium glutamicum genome: features and impacts on biotechnological processes.</title>
        <authorList>
            <person name="Ikeda M."/>
            <person name="Nakagawa S."/>
        </authorList>
    </citation>
    <scope>NUCLEOTIDE SEQUENCE [LARGE SCALE GENOMIC DNA]</scope>
    <source>
        <strain>ATCC 13032 / DSM 20300 / JCM 1318 / BCRC 11384 / CCUG 27702 / LMG 3730 / NBRC 12168 / NCIMB 10025 / NRRL B-2784 / 534</strain>
    </source>
</reference>
<reference key="2">
    <citation type="journal article" date="2003" name="J. Biotechnol.">
        <title>The complete Corynebacterium glutamicum ATCC 13032 genome sequence and its impact on the production of L-aspartate-derived amino acids and vitamins.</title>
        <authorList>
            <person name="Kalinowski J."/>
            <person name="Bathe B."/>
            <person name="Bartels D."/>
            <person name="Bischoff N."/>
            <person name="Bott M."/>
            <person name="Burkovski A."/>
            <person name="Dusch N."/>
            <person name="Eggeling L."/>
            <person name="Eikmanns B.J."/>
            <person name="Gaigalat L."/>
            <person name="Goesmann A."/>
            <person name="Hartmann M."/>
            <person name="Huthmacher K."/>
            <person name="Kraemer R."/>
            <person name="Linke B."/>
            <person name="McHardy A.C."/>
            <person name="Meyer F."/>
            <person name="Moeckel B."/>
            <person name="Pfefferle W."/>
            <person name="Puehler A."/>
            <person name="Rey D.A."/>
            <person name="Rueckert C."/>
            <person name="Rupp O."/>
            <person name="Sahm H."/>
            <person name="Wendisch V.F."/>
            <person name="Wiegraebe I."/>
            <person name="Tauch A."/>
        </authorList>
    </citation>
    <scope>NUCLEOTIDE SEQUENCE [LARGE SCALE GENOMIC DNA]</scope>
    <source>
        <strain>ATCC 13032 / DSM 20300 / JCM 1318 / BCRC 11384 / CCUG 27702 / LMG 3730 / NBRC 12168 / NCIMB 10025 / NRRL B-2784 / 534</strain>
    </source>
</reference>
<organism>
    <name type="scientific">Corynebacterium glutamicum (strain ATCC 13032 / DSM 20300 / JCM 1318 / BCRC 11384 / CCUG 27702 / LMG 3730 / NBRC 12168 / NCIMB 10025 / NRRL B-2784 / 534)</name>
    <dbReference type="NCBI Taxonomy" id="196627"/>
    <lineage>
        <taxon>Bacteria</taxon>
        <taxon>Bacillati</taxon>
        <taxon>Actinomycetota</taxon>
        <taxon>Actinomycetes</taxon>
        <taxon>Mycobacteriales</taxon>
        <taxon>Corynebacteriaceae</taxon>
        <taxon>Corynebacterium</taxon>
    </lineage>
</organism>
<comment type="function">
    <text evidence="1">Participates actively in the response to hyperosmotic and heat shock by preventing the aggregation of stress-denatured proteins and by disaggregating proteins, also in an autonomous, DnaK-independent fashion. Unfolded proteins bind initially to DnaJ; upon interaction with the DnaJ-bound protein, DnaK hydrolyzes its bound ATP, resulting in the formation of a stable complex. GrpE releases ADP from DnaK; ATP binding to DnaK triggers the release of the substrate protein, thus completing the reaction cycle. Several rounds of ATP-dependent interactions between DnaJ, DnaK and GrpE are required for fully efficient folding. Also involved, together with DnaK and GrpE, in the DNA replication of plasmids through activation of initiation proteins.</text>
</comment>
<comment type="cofactor">
    <cofactor evidence="1">
        <name>Zn(2+)</name>
        <dbReference type="ChEBI" id="CHEBI:29105"/>
    </cofactor>
    <text evidence="1">Binds 2 Zn(2+) ions per monomer.</text>
</comment>
<comment type="subunit">
    <text evidence="1">Homodimer.</text>
</comment>
<comment type="subcellular location">
    <subcellularLocation>
        <location evidence="1">Cytoplasm</location>
    </subcellularLocation>
</comment>
<comment type="domain">
    <text evidence="1">The J domain is necessary and sufficient to stimulate DnaK ATPase activity. Zinc center 1 plays an important role in the autonomous, DnaK-independent chaperone activity of DnaJ. Zinc center 2 is essential for interaction with DnaK and for DnaJ activity.</text>
</comment>
<comment type="similarity">
    <text evidence="1">Belongs to the DnaJ family.</text>
</comment>
<name>DNAJ1_CORGL</name>
<dbReference type="EMBL" id="BA000036">
    <property type="protein sequence ID" value="BAB99683.1"/>
    <property type="molecule type" value="Genomic_DNA"/>
</dbReference>
<dbReference type="EMBL" id="BX927154">
    <property type="protein sequence ID" value="CAF20632.1"/>
    <property type="molecule type" value="Genomic_DNA"/>
</dbReference>
<dbReference type="RefSeq" id="NP_601490.1">
    <property type="nucleotide sequence ID" value="NC_003450.3"/>
</dbReference>
<dbReference type="SMR" id="Q8NNB4"/>
<dbReference type="STRING" id="196627.cg2515"/>
<dbReference type="KEGG" id="cgb:cg2515"/>
<dbReference type="KEGG" id="cgl:Cgl2290"/>
<dbReference type="PATRIC" id="fig|196627.13.peg.2224"/>
<dbReference type="eggNOG" id="COG0484">
    <property type="taxonomic scope" value="Bacteria"/>
</dbReference>
<dbReference type="HOGENOM" id="CLU_017633_0_7_11"/>
<dbReference type="OrthoDB" id="9779889at2"/>
<dbReference type="BioCyc" id="CORYNE:G18NG-11887-MONOMER"/>
<dbReference type="Proteomes" id="UP000000582">
    <property type="component" value="Chromosome"/>
</dbReference>
<dbReference type="Proteomes" id="UP000001009">
    <property type="component" value="Chromosome"/>
</dbReference>
<dbReference type="GO" id="GO:0005737">
    <property type="term" value="C:cytoplasm"/>
    <property type="evidence" value="ECO:0007669"/>
    <property type="project" value="UniProtKB-SubCell"/>
</dbReference>
<dbReference type="GO" id="GO:0005524">
    <property type="term" value="F:ATP binding"/>
    <property type="evidence" value="ECO:0007669"/>
    <property type="project" value="InterPro"/>
</dbReference>
<dbReference type="GO" id="GO:0031072">
    <property type="term" value="F:heat shock protein binding"/>
    <property type="evidence" value="ECO:0007669"/>
    <property type="project" value="InterPro"/>
</dbReference>
<dbReference type="GO" id="GO:0051082">
    <property type="term" value="F:unfolded protein binding"/>
    <property type="evidence" value="ECO:0007669"/>
    <property type="project" value="UniProtKB-UniRule"/>
</dbReference>
<dbReference type="GO" id="GO:0008270">
    <property type="term" value="F:zinc ion binding"/>
    <property type="evidence" value="ECO:0007669"/>
    <property type="project" value="UniProtKB-UniRule"/>
</dbReference>
<dbReference type="GO" id="GO:0051085">
    <property type="term" value="P:chaperone cofactor-dependent protein refolding"/>
    <property type="evidence" value="ECO:0007669"/>
    <property type="project" value="TreeGrafter"/>
</dbReference>
<dbReference type="GO" id="GO:0006260">
    <property type="term" value="P:DNA replication"/>
    <property type="evidence" value="ECO:0007669"/>
    <property type="project" value="UniProtKB-KW"/>
</dbReference>
<dbReference type="GO" id="GO:0042026">
    <property type="term" value="P:protein refolding"/>
    <property type="evidence" value="ECO:0007669"/>
    <property type="project" value="TreeGrafter"/>
</dbReference>
<dbReference type="GO" id="GO:0009408">
    <property type="term" value="P:response to heat"/>
    <property type="evidence" value="ECO:0007669"/>
    <property type="project" value="InterPro"/>
</dbReference>
<dbReference type="CDD" id="cd06257">
    <property type="entry name" value="DnaJ"/>
    <property type="match status" value="1"/>
</dbReference>
<dbReference type="CDD" id="cd10747">
    <property type="entry name" value="DnaJ_C"/>
    <property type="match status" value="1"/>
</dbReference>
<dbReference type="CDD" id="cd10719">
    <property type="entry name" value="DnaJ_zf"/>
    <property type="match status" value="1"/>
</dbReference>
<dbReference type="FunFam" id="2.60.260.20:FF:000005">
    <property type="entry name" value="Chaperone protein dnaJ 1, mitochondrial"/>
    <property type="match status" value="1"/>
</dbReference>
<dbReference type="Gene3D" id="6.20.20.10">
    <property type="match status" value="2"/>
</dbReference>
<dbReference type="Gene3D" id="1.10.287.110">
    <property type="entry name" value="DnaJ domain"/>
    <property type="match status" value="1"/>
</dbReference>
<dbReference type="Gene3D" id="2.60.260.20">
    <property type="entry name" value="Urease metallochaperone UreE, N-terminal domain"/>
    <property type="match status" value="2"/>
</dbReference>
<dbReference type="HAMAP" id="MF_01152">
    <property type="entry name" value="DnaJ"/>
    <property type="match status" value="1"/>
</dbReference>
<dbReference type="InterPro" id="IPR012724">
    <property type="entry name" value="DnaJ"/>
</dbReference>
<dbReference type="InterPro" id="IPR002939">
    <property type="entry name" value="DnaJ_C"/>
</dbReference>
<dbReference type="InterPro" id="IPR001623">
    <property type="entry name" value="DnaJ_domain"/>
</dbReference>
<dbReference type="InterPro" id="IPR008971">
    <property type="entry name" value="HSP40/DnaJ_pept-bd"/>
</dbReference>
<dbReference type="InterPro" id="IPR001305">
    <property type="entry name" value="HSP_DnaJ_Cys-rich_dom"/>
</dbReference>
<dbReference type="InterPro" id="IPR036410">
    <property type="entry name" value="HSP_DnaJ_Cys-rich_dom_sf"/>
</dbReference>
<dbReference type="InterPro" id="IPR036869">
    <property type="entry name" value="J_dom_sf"/>
</dbReference>
<dbReference type="NCBIfam" id="TIGR02349">
    <property type="entry name" value="DnaJ_bact"/>
    <property type="match status" value="1"/>
</dbReference>
<dbReference type="NCBIfam" id="NF008035">
    <property type="entry name" value="PRK10767.1"/>
    <property type="match status" value="1"/>
</dbReference>
<dbReference type="NCBIfam" id="NF010871">
    <property type="entry name" value="PRK14278.1"/>
    <property type="match status" value="1"/>
</dbReference>
<dbReference type="PANTHER" id="PTHR43096:SF48">
    <property type="entry name" value="CHAPERONE PROTEIN DNAJ"/>
    <property type="match status" value="1"/>
</dbReference>
<dbReference type="PANTHER" id="PTHR43096">
    <property type="entry name" value="DNAJ HOMOLOG 1, MITOCHONDRIAL-RELATED"/>
    <property type="match status" value="1"/>
</dbReference>
<dbReference type="Pfam" id="PF00226">
    <property type="entry name" value="DnaJ"/>
    <property type="match status" value="1"/>
</dbReference>
<dbReference type="Pfam" id="PF01556">
    <property type="entry name" value="DnaJ_C"/>
    <property type="match status" value="1"/>
</dbReference>
<dbReference type="Pfam" id="PF00684">
    <property type="entry name" value="DnaJ_CXXCXGXG"/>
    <property type="match status" value="1"/>
</dbReference>
<dbReference type="PRINTS" id="PR00625">
    <property type="entry name" value="JDOMAIN"/>
</dbReference>
<dbReference type="SMART" id="SM00271">
    <property type="entry name" value="DnaJ"/>
    <property type="match status" value="1"/>
</dbReference>
<dbReference type="SUPFAM" id="SSF46565">
    <property type="entry name" value="Chaperone J-domain"/>
    <property type="match status" value="1"/>
</dbReference>
<dbReference type="SUPFAM" id="SSF57938">
    <property type="entry name" value="DnaJ/Hsp40 cysteine-rich domain"/>
    <property type="match status" value="1"/>
</dbReference>
<dbReference type="SUPFAM" id="SSF49493">
    <property type="entry name" value="HSP40/DnaJ peptide-binding domain"/>
    <property type="match status" value="2"/>
</dbReference>
<dbReference type="PROSITE" id="PS50076">
    <property type="entry name" value="DNAJ_2"/>
    <property type="match status" value="1"/>
</dbReference>
<dbReference type="PROSITE" id="PS51188">
    <property type="entry name" value="ZF_CR"/>
    <property type="match status" value="1"/>
</dbReference>
<sequence>MARDYYGILGVDRNATESEIKKAYRKLARKYHPDVNPGEEAAEKFREASVAHEVLTDPDKRRIVDMGGDPMEQGGGAGAGGFGGGFGGSGGLGDIFDAFFGGGAGGSRGPRSRVQPGSDTLWRTSITLEEAYKGAKKDLTLDTAVLCTKCHGSGSASDKKPVTCGTCNGAGEIQEVQRSFLGNVMTSRPCHTCDGTGEIIPDPCTECAGDGRVRARRDIVANIPAGIQSGMRIRMAGQGEVGAGGGPAGDLYIEVMVRPHAIFTRDGDDLHASIKVPMFDAALGTELDVESLTGEEVKITIPAGTQPNDVITLDGEGMPKLRAEGHGNLMAHVDLFVPTDLDDRTRELLEEIRNHRSDNASVHREGGEESGFFDKLRNKFRK</sequence>
<feature type="chain" id="PRO_0000070770" description="Chaperone protein DnaJ 1">
    <location>
        <begin position="1"/>
        <end position="382"/>
    </location>
</feature>
<feature type="domain" description="J" evidence="1">
    <location>
        <begin position="4"/>
        <end position="68"/>
    </location>
</feature>
<feature type="repeat" description="CXXCXGXG motif">
    <location>
        <begin position="147"/>
        <end position="154"/>
    </location>
</feature>
<feature type="repeat" description="CXXCXGXG motif">
    <location>
        <begin position="164"/>
        <end position="171"/>
    </location>
</feature>
<feature type="repeat" description="CXXCXGXG motif">
    <location>
        <begin position="190"/>
        <end position="197"/>
    </location>
</feature>
<feature type="repeat" description="CXXCXGXG motif">
    <location>
        <begin position="204"/>
        <end position="211"/>
    </location>
</feature>
<feature type="zinc finger region" description="CR-type" evidence="1">
    <location>
        <begin position="134"/>
        <end position="216"/>
    </location>
</feature>
<feature type="binding site" evidence="1">
    <location>
        <position position="147"/>
    </location>
    <ligand>
        <name>Zn(2+)</name>
        <dbReference type="ChEBI" id="CHEBI:29105"/>
        <label>1</label>
    </ligand>
</feature>
<feature type="binding site" evidence="1">
    <location>
        <position position="150"/>
    </location>
    <ligand>
        <name>Zn(2+)</name>
        <dbReference type="ChEBI" id="CHEBI:29105"/>
        <label>1</label>
    </ligand>
</feature>
<feature type="binding site" evidence="1">
    <location>
        <position position="164"/>
    </location>
    <ligand>
        <name>Zn(2+)</name>
        <dbReference type="ChEBI" id="CHEBI:29105"/>
        <label>2</label>
    </ligand>
</feature>
<feature type="binding site" evidence="1">
    <location>
        <position position="167"/>
    </location>
    <ligand>
        <name>Zn(2+)</name>
        <dbReference type="ChEBI" id="CHEBI:29105"/>
        <label>2</label>
    </ligand>
</feature>
<feature type="binding site" evidence="1">
    <location>
        <position position="190"/>
    </location>
    <ligand>
        <name>Zn(2+)</name>
        <dbReference type="ChEBI" id="CHEBI:29105"/>
        <label>2</label>
    </ligand>
</feature>
<feature type="binding site" evidence="1">
    <location>
        <position position="193"/>
    </location>
    <ligand>
        <name>Zn(2+)</name>
        <dbReference type="ChEBI" id="CHEBI:29105"/>
        <label>2</label>
    </ligand>
</feature>
<feature type="binding site" evidence="1">
    <location>
        <position position="204"/>
    </location>
    <ligand>
        <name>Zn(2+)</name>
        <dbReference type="ChEBI" id="CHEBI:29105"/>
        <label>1</label>
    </ligand>
</feature>
<feature type="binding site" evidence="1">
    <location>
        <position position="207"/>
    </location>
    <ligand>
        <name>Zn(2+)</name>
        <dbReference type="ChEBI" id="CHEBI:29105"/>
        <label>1</label>
    </ligand>
</feature>
<accession>Q8NNB4</accession>
<accession>Q6M3F3</accession>
<keyword id="KW-0143">Chaperone</keyword>
<keyword id="KW-0963">Cytoplasm</keyword>
<keyword id="KW-0235">DNA replication</keyword>
<keyword id="KW-0479">Metal-binding</keyword>
<keyword id="KW-1185">Reference proteome</keyword>
<keyword id="KW-0677">Repeat</keyword>
<keyword id="KW-0346">Stress response</keyword>
<keyword id="KW-0862">Zinc</keyword>
<keyword id="KW-0863">Zinc-finger</keyword>
<evidence type="ECO:0000255" key="1">
    <source>
        <dbReference type="HAMAP-Rule" id="MF_01152"/>
    </source>
</evidence>
<gene>
    <name evidence="1" type="primary">dnaJ1</name>
    <name type="ordered locus">Cgl2290</name>
    <name type="ordered locus">cg2515</name>
</gene>